<accession>B8QIR1</accession>
<proteinExistence type="evidence at protein level"/>
<organismHost>
    <name type="scientific">Staphylococcus aureus</name>
    <dbReference type="NCBI Taxonomy" id="1280"/>
</organismHost>
<protein>
    <recommendedName>
        <fullName evidence="10">Endolysin LysH5</fullName>
    </recommendedName>
    <alternativeName>
        <fullName evidence="3">D-alanyl-glycyl endopeptidase</fullName>
        <ecNumber evidence="3">3.4.22.-</ecNumber>
    </alternativeName>
    <alternativeName>
        <fullName evidence="10">H5 endolysin</fullName>
        <shortName evidence="11">LysH5</shortName>
    </alternativeName>
    <alternativeName>
        <fullName evidence="3">N-acetylmuramoyl-L-alanine amidase</fullName>
        <ecNumber evidence="3">3.5.1.28</ecNumber>
    </alternativeName>
</protein>
<dbReference type="EC" id="3.4.22.-" evidence="3"/>
<dbReference type="EC" id="3.5.1.28" evidence="3"/>
<dbReference type="EMBL" id="EU573240">
    <property type="protein sequence ID" value="ACE77796.1"/>
    <property type="molecule type" value="Genomic_DNA"/>
</dbReference>
<dbReference type="SMR" id="B8QIR1"/>
<dbReference type="GO" id="GO:0046872">
    <property type="term" value="F:metal ion binding"/>
    <property type="evidence" value="ECO:0007669"/>
    <property type="project" value="UniProtKB-KW"/>
</dbReference>
<dbReference type="GO" id="GO:0008745">
    <property type="term" value="F:N-acetylmuramoyl-L-alanine amidase activity"/>
    <property type="evidence" value="ECO:0007669"/>
    <property type="project" value="InterPro"/>
</dbReference>
<dbReference type="GO" id="GO:0008233">
    <property type="term" value="F:peptidase activity"/>
    <property type="evidence" value="ECO:0007669"/>
    <property type="project" value="UniProtKB-KW"/>
</dbReference>
<dbReference type="GO" id="GO:0071555">
    <property type="term" value="P:cell wall organization"/>
    <property type="evidence" value="ECO:0007669"/>
    <property type="project" value="UniProtKB-KW"/>
</dbReference>
<dbReference type="GO" id="GO:0042742">
    <property type="term" value="P:defense response to bacterium"/>
    <property type="evidence" value="ECO:0007669"/>
    <property type="project" value="UniProtKB-KW"/>
</dbReference>
<dbReference type="GO" id="GO:0009253">
    <property type="term" value="P:peptidoglycan catabolic process"/>
    <property type="evidence" value="ECO:0007669"/>
    <property type="project" value="InterPro"/>
</dbReference>
<dbReference type="GO" id="GO:0006508">
    <property type="term" value="P:proteolysis"/>
    <property type="evidence" value="ECO:0007669"/>
    <property type="project" value="UniProtKB-KW"/>
</dbReference>
<dbReference type="GO" id="GO:0044659">
    <property type="term" value="P:viral release from host cell by cytolysis"/>
    <property type="evidence" value="ECO:0000314"/>
    <property type="project" value="CACAO"/>
</dbReference>
<dbReference type="CDD" id="cd06583">
    <property type="entry name" value="PGRP"/>
    <property type="match status" value="1"/>
</dbReference>
<dbReference type="FunFam" id="3.90.1720.10:FF:000005">
    <property type="entry name" value="Amidase"/>
    <property type="match status" value="1"/>
</dbReference>
<dbReference type="FunFam" id="3.40.80.10:FF:000005">
    <property type="entry name" value="N-acetylmuramoyl-L-alanine amidase"/>
    <property type="match status" value="1"/>
</dbReference>
<dbReference type="Gene3D" id="3.90.1720.10">
    <property type="entry name" value="endopeptidase domain like (from Nostoc punctiforme)"/>
    <property type="match status" value="1"/>
</dbReference>
<dbReference type="Gene3D" id="3.40.80.10">
    <property type="entry name" value="Peptidoglycan recognition protein-like"/>
    <property type="match status" value="1"/>
</dbReference>
<dbReference type="Gene3D" id="2.30.30.40">
    <property type="entry name" value="SH3 Domains"/>
    <property type="match status" value="1"/>
</dbReference>
<dbReference type="InterPro" id="IPR036505">
    <property type="entry name" value="Amidase/PGRP_sf"/>
</dbReference>
<dbReference type="InterPro" id="IPR002502">
    <property type="entry name" value="Amidase_domain"/>
</dbReference>
<dbReference type="InterPro" id="IPR007921">
    <property type="entry name" value="CHAP_dom"/>
</dbReference>
<dbReference type="InterPro" id="IPR038765">
    <property type="entry name" value="Papain-like_cys_pep_sf"/>
</dbReference>
<dbReference type="InterPro" id="IPR003646">
    <property type="entry name" value="SH3-like_bac-type"/>
</dbReference>
<dbReference type="Pfam" id="PF01510">
    <property type="entry name" value="Amidase_2"/>
    <property type="match status" value="1"/>
</dbReference>
<dbReference type="Pfam" id="PF05257">
    <property type="entry name" value="CHAP"/>
    <property type="match status" value="1"/>
</dbReference>
<dbReference type="Pfam" id="PF08460">
    <property type="entry name" value="SH3_5"/>
    <property type="match status" value="1"/>
</dbReference>
<dbReference type="SMART" id="SM00644">
    <property type="entry name" value="Ami_2"/>
    <property type="match status" value="1"/>
</dbReference>
<dbReference type="SMART" id="SM00287">
    <property type="entry name" value="SH3b"/>
    <property type="match status" value="1"/>
</dbReference>
<dbReference type="SUPFAM" id="SSF54001">
    <property type="entry name" value="Cysteine proteinases"/>
    <property type="match status" value="1"/>
</dbReference>
<dbReference type="SUPFAM" id="SSF55846">
    <property type="entry name" value="N-acetylmuramoyl-L-alanine amidase-like"/>
    <property type="match status" value="1"/>
</dbReference>
<dbReference type="PROSITE" id="PS50911">
    <property type="entry name" value="CHAP"/>
    <property type="match status" value="1"/>
</dbReference>
<dbReference type="PROSITE" id="PS51781">
    <property type="entry name" value="SH3B"/>
    <property type="match status" value="1"/>
</dbReference>
<sequence>MQAKLTKKEFIEWLKTSEGKQYNADGWYGFQCFDYANAGWKALFGLLLKGVGAKDIPFANNFDGLATVYQNTPDFLAQPGDMVVFGSNYGAGYGHVAWVIEATLDYIIVYEQNWLGGGWTDGVQQPGSGWEKVTRRQHAYDFPMWFIRPNFKSETAPRSVQSPTQASKKETAKPQPKAVELKIIKDVVKGYDLPKRGSNPNFIVIHNDAGSKGATAEAYRNGLVNAPLSRLEAGIAHSYVSGNTVWQALDESQVGWHTANQIGNKYGYGIEVCQSMGADNATFLKNEQATFQECARLLKKWGLPANRNTIRLHNEFTSTSCPHRSSVLHTGFDPVTRGLLPEDKRLQLKDYFIKQIRAYMDGKIPVATVSNDSSASSNTVKPVASAWKRNKYGTYYMEESARFTNGNQPITVRKVGPFLSCPVGYQFQPGGYCDYTEVMLQDGHVWVGYTWEGQRYYLPIRTWNGSAPPNQILGDLWGEIS</sequence>
<reference evidence="11" key="1">
    <citation type="journal article" date="2008" name="Int. J. Food Microbiol.">
        <title>Lytic activity of the recombinant staphylococcal bacteriophage PhiH5 endolysin active against Staphylococcus aureus in milk.</title>
        <authorList>
            <person name="Obeso J.M."/>
            <person name="Martinez B."/>
            <person name="Rodriguez A."/>
            <person name="Garcia P."/>
        </authorList>
    </citation>
    <scope>NUCLEOTIDE SEQUENCE [GENOMIC DNA]</scope>
    <scope>FUNCTION</scope>
    <scope>ACTIVITY REGULATION</scope>
    <scope>BIOPHYSICOCHEMICAL PROPERTIES</scope>
</reference>
<evidence type="ECO:0000250" key="1">
    <source>
        <dbReference type="UniProtKB" id="D6QY02"/>
    </source>
</evidence>
<evidence type="ECO:0000250" key="2">
    <source>
        <dbReference type="UniProtKB" id="P00806"/>
    </source>
</evidence>
<evidence type="ECO:0000250" key="3">
    <source>
        <dbReference type="UniProtKB" id="Q6Y7T6"/>
    </source>
</evidence>
<evidence type="ECO:0000255" key="4"/>
<evidence type="ECO:0000255" key="5">
    <source>
        <dbReference type="PROSITE-ProRule" id="PRU00048"/>
    </source>
</evidence>
<evidence type="ECO:0000255" key="6">
    <source>
        <dbReference type="PROSITE-ProRule" id="PRU01117"/>
    </source>
</evidence>
<evidence type="ECO:0000256" key="7">
    <source>
        <dbReference type="SAM" id="MobiDB-lite"/>
    </source>
</evidence>
<evidence type="ECO:0000269" key="8">
    <source>
    </source>
</evidence>
<evidence type="ECO:0000303" key="9">
    <source>
    </source>
</evidence>
<evidence type="ECO:0000305" key="10"/>
<evidence type="ECO:0000312" key="11">
    <source>
        <dbReference type="EMBL" id="ACE77796.1"/>
    </source>
</evidence>
<organism>
    <name type="scientific">Staphylococcus phage phiH5</name>
    <name type="common">Bacteriophage phiH5</name>
    <dbReference type="NCBI Taxonomy" id="538529"/>
    <lineage>
        <taxon>Viruses</taxon>
        <taxon>Duplodnaviria</taxon>
        <taxon>Heunggongvirae</taxon>
        <taxon>Uroviricota</taxon>
        <taxon>Caudoviricetes</taxon>
    </lineage>
</organism>
<keyword id="KW-0929">Antimicrobial</keyword>
<keyword id="KW-0081">Bacteriolytic enzyme</keyword>
<keyword id="KW-0106">Calcium</keyword>
<keyword id="KW-0961">Cell wall biogenesis/degradation</keyword>
<keyword id="KW-0204">Cytolysis</keyword>
<keyword id="KW-0578">Host cell lysis by virus</keyword>
<keyword id="KW-0378">Hydrolase</keyword>
<keyword id="KW-0479">Metal-binding</keyword>
<keyword id="KW-0511">Multifunctional enzyme</keyword>
<keyword id="KW-0645">Protease</keyword>
<keyword id="KW-1188">Viral release from host cell</keyword>
<keyword id="KW-0862">Zinc</keyword>
<gene>
    <name evidence="9" type="primary">LysH5</name>
</gene>
<comment type="function">
    <text evidence="3 8 10">Endolysin that degrades host peptidoglycans and participates in the sequential events which lead to the programmed host cell lysis releasing the mature viral particles (Probable). Exhibits lytic activity against Staphylococcus aureus isolated from human and bovine samples, as well as Staphylococcus epidermidis isolated from human samples, although with lower lytic activity (PubMed:18809219). No lytic activity detected against several lactic acid bacteria and strains belonging to Bacillus, Streptococcus, Clostridium, Listeria, and Enterococcus (PubMed:18809219). The CHAP activity cleaves the peptidic bond between D-Ala and Gly in the host peptidoglycan (By similarity). The N-acetyl-muramidase activity cleaves between N-acetylmuramic acid and N-acetylglucosamine bonds (By similarity).</text>
</comment>
<comment type="catalytic activity">
    <reaction evidence="2">
        <text>Hydrolyzes the link between N-acetylmuramoyl residues and L-amino acid residues in certain cell-wall glycopeptides.</text>
        <dbReference type="EC" id="3.5.1.28"/>
    </reaction>
</comment>
<comment type="cofactor">
    <cofactor evidence="2">
        <name>Zn(2+)</name>
        <dbReference type="ChEBI" id="CHEBI:29105"/>
    </cofactor>
    <text evidence="2">Zn(2+) is required for amidase activity.</text>
</comment>
<comment type="activity regulation">
    <text evidence="8">Decreased lytic activity with increasing temperature.</text>
</comment>
<comment type="biophysicochemical properties">
    <phDependence>
        <text evidence="8">Optimum pH is 7.5.</text>
    </phDependence>
    <temperatureDependence>
        <text evidence="8">Optimum temperature is 37 degrees Celsius.</text>
    </temperatureDependence>
</comment>
<comment type="domain">
    <text evidence="3">Contains a cysteine-histidine dependent amido-hydrolase/peptidase domain (peptidase C51/CHAP domain) at the N-terminus, a central amidase domain and a SH3b cell wall-binding domain at the C-terminus (By similarity). The CHAP domain is present at the N-terminus and is associated with the endopeptidase activity (By similarity). The SH3b domain increases the CHAP domain activity (By similarity).</text>
</comment>
<comment type="similarity">
    <text evidence="10">Belongs to the N-acetylmuramoyl-L-alanine amidase 2 family.</text>
</comment>
<feature type="chain" id="PRO_0000458753" description="Endolysin LysH5">
    <location>
        <begin position="1"/>
        <end position="481"/>
    </location>
</feature>
<feature type="domain" description="Peptidase C51" evidence="5">
    <location>
        <begin position="7"/>
        <end position="148"/>
    </location>
</feature>
<feature type="domain" description="N-acetylmuramoyl-L-alanine amidase" evidence="4">
    <location>
        <begin position="198"/>
        <end position="323"/>
    </location>
</feature>
<feature type="domain" description="SH3b" evidence="6">
    <location>
        <begin position="398"/>
        <end position="466"/>
    </location>
</feature>
<feature type="region of interest" description="Disordered" evidence="7">
    <location>
        <begin position="155"/>
        <end position="177"/>
    </location>
</feature>
<feature type="compositionally biased region" description="Polar residues" evidence="7">
    <location>
        <begin position="155"/>
        <end position="166"/>
    </location>
</feature>
<feature type="active site" description="For endopeptidase activity" evidence="3">
    <location>
        <position position="32"/>
    </location>
</feature>
<feature type="active site" description="For endopeptidase activity" evidence="3">
    <location>
        <position position="95"/>
    </location>
</feature>
<feature type="active site" description="For endopeptidase activity" evidence="3">
    <location>
        <position position="111"/>
    </location>
</feature>
<feature type="binding site" evidence="3">
    <location>
        <position position="34"/>
    </location>
    <ligand>
        <name>Ca(2+)</name>
        <dbReference type="ChEBI" id="CHEBI:29108"/>
    </ligand>
</feature>
<feature type="binding site" evidence="1">
    <location>
        <position position="206"/>
    </location>
    <ligand>
        <name>Zn(2+)</name>
        <dbReference type="ChEBI" id="CHEBI:29105"/>
    </ligand>
</feature>
<feature type="binding site" evidence="1">
    <location>
        <position position="313"/>
    </location>
    <ligand>
        <name>Zn(2+)</name>
        <dbReference type="ChEBI" id="CHEBI:29105"/>
    </ligand>
</feature>
<feature type="binding site" evidence="1">
    <location>
        <position position="321"/>
    </location>
    <ligand>
        <name>Zn(2+)</name>
        <dbReference type="ChEBI" id="CHEBI:29105"/>
    </ligand>
</feature>
<name>ENLYS_BPSH5</name>